<feature type="chain" id="PRO_0000101814" description="Disintegrin obtustatin">
    <location>
        <begin position="1"/>
        <end position="41"/>
    </location>
</feature>
<feature type="domain" description="Disintegrin">
    <location>
        <begin position="1"/>
        <end position="41"/>
    </location>
</feature>
<feature type="short sequence motif" description="Cell attachment site; atypical (KTS)">
    <location>
        <begin position="21"/>
        <end position="23"/>
    </location>
</feature>
<feature type="site" description="Indirectly maintains the active conformation of the loop">
    <location>
        <position position="22"/>
    </location>
</feature>
<feature type="disulfide bond" evidence="4 13">
    <location>
        <begin position="1"/>
        <end position="10"/>
    </location>
</feature>
<feature type="disulfide bond" evidence="4 13">
    <location>
        <begin position="6"/>
        <end position="29"/>
    </location>
</feature>
<feature type="disulfide bond" evidence="4 13">
    <location>
        <begin position="7"/>
        <end position="34"/>
    </location>
</feature>
<feature type="disulfide bond" evidence="4 13">
    <location>
        <begin position="19"/>
        <end position="36"/>
    </location>
</feature>
<feature type="mutagenesis site" description="Increase in inhibitory activity towards alpha-1/beta-1 integrin." evidence="5">
    <original>L</original>
    <variation>R</variation>
    <location>
        <position position="24"/>
    </location>
</feature>
<feature type="strand" evidence="14">
    <location>
        <begin position="3"/>
        <end position="5"/>
    </location>
</feature>
<feature type="turn" evidence="14">
    <location>
        <begin position="8"/>
        <end position="10"/>
    </location>
</feature>
<feature type="strand" evidence="14">
    <location>
        <begin position="13"/>
        <end position="15"/>
    </location>
</feature>
<feature type="strand" evidence="14">
    <location>
        <begin position="23"/>
        <end position="25"/>
    </location>
</feature>
<feature type="strand" evidence="14">
    <location>
        <begin position="31"/>
        <end position="33"/>
    </location>
</feature>
<reference key="1">
    <citation type="journal article" date="2003" name="Protein Sci.">
        <title>Amino acid sequence and homology modeling of obtustatin, a novel non-RGD-containing short disintegrin isolated from the venom of Vipera lebetina obtusa.</title>
        <authorList>
            <person name="Moreno-Murciano M.P."/>
            <person name="Monleon D."/>
            <person name="Calvete J.J."/>
            <person name="Celda B."/>
            <person name="Marcinkiewicz C."/>
        </authorList>
    </citation>
    <scope>PROTEIN SEQUENCE</scope>
    <scope>FUNCTION</scope>
    <scope>SUBCELLULAR LOCATION</scope>
    <scope>TISSUE SPECIFICITY</scope>
    <source>
        <tissue>Venom</tissue>
    </source>
</reference>
<reference key="2">
    <citation type="journal article" date="2003" name="Cancer Res.">
        <title>Obtustatin: a potent selective inhibitor of alpha1beta1 integrin in vitro and angiogenesis in vivo.</title>
        <authorList>
            <person name="Marcinkiewicz C."/>
            <person name="Weinreb P.H."/>
            <person name="Calvete J.J."/>
            <person name="Kisiel D.G."/>
            <person name="Mousa S.A."/>
            <person name="Tuszynski G.P."/>
            <person name="Lobb R.R."/>
        </authorList>
    </citation>
    <scope>FUNCTION</scope>
    <source>
        <tissue>Venom</tissue>
    </source>
</reference>
<reference key="3">
    <citation type="journal article" date="2004" name="FEBS Lett.">
        <title>Structural determinants of the selectivity of KTS-disintegrins for the alpha1beta1 integrin.</title>
        <authorList>
            <person name="Kisiel D.G."/>
            <person name="Calvete J.J."/>
            <person name="Katzhendler J."/>
            <person name="Fertala A."/>
            <person name="Lazarovici P."/>
            <person name="Marcinkiewicz C."/>
        </authorList>
    </citation>
    <scope>SYNTHESIS OF 19-29</scope>
    <scope>MUTAGENESIS OF LEU-24</scope>
    <source>
        <tissue>Venom</tissue>
    </source>
</reference>
<reference key="4">
    <citation type="journal article" date="2003" name="J. Biol. Chem.">
        <title>Concerted motions of the integrin-binding loop and the C-terminal tail of the non-RGD disintegrin obtustatin.</title>
        <authorList>
            <person name="Monleon D."/>
            <person name="Moreno-Murciano M.P."/>
            <person name="Kovacs H."/>
            <person name="Marcinkiewicz C."/>
            <person name="Calvete J.J."/>
            <person name="Celda B."/>
        </authorList>
    </citation>
    <scope>STRUCTURE BY NMR</scope>
    <scope>SITE</scope>
</reference>
<reference evidence="12" key="5">
    <citation type="journal article" date="2003" name="J. Mol. Biol.">
        <title>NMR solution structure of the non-RGD disintegrin obtustatin.</title>
        <authorList>
            <person name="Moreno-Murciano M.P."/>
            <person name="Monleon D."/>
            <person name="Marcinkiewicz C."/>
            <person name="Calvete J.J."/>
            <person name="Celda B."/>
        </authorList>
    </citation>
    <scope>STRUCTURE BY NMR</scope>
    <scope>DISULFIDE BONDS</scope>
</reference>
<comment type="function">
    <text evidence="2 3">Is a potent and selective inhibitor of alpha-1/beta-1 (ITGA1/ITGB1) integrin. It blocks the adhesion of alpha-1/beta-1-expressing K562 cells to immobilized collagens IV and I with IC(50) of 2 and 0.5 nM, respectively. Potently inhibits angiogenesis in chicken and in mouse model and reduces tumor development by half. Is 25-fold less potent than viperistatin.</text>
</comment>
<comment type="subunit">
    <text evidence="1">Monomer.</text>
</comment>
<comment type="subcellular location">
    <subcellularLocation>
        <location evidence="2">Secreted</location>
    </subcellularLocation>
</comment>
<comment type="tissue specificity">
    <text evidence="2">Expressed by the venom gland.</text>
</comment>
<comment type="miscellaneous">
    <text evidence="11">Negative results: does not show inhibitory activity toward alpha-2/beta-1 (ITGA2/ITGB1), alpha-IIb/beta-3 (ITGA2B/ITGB3), alpha-V/beta-3 (ITGAV/ITGB3), alpha-4/beta-1 (ITGA4/ITGB1), alpha-5/beta-1 (ITGA5/ITGB1), alpha-6/beta-1 (ITGA6/ITGB1), and alpha-9/beta-1 (ITGA9/ITGB1), alpha-4/beta-7 (ITGA4/ITGB7) integrins.</text>
</comment>
<comment type="similarity">
    <text evidence="10">Belongs to the disintegrin family. Short disintegrin subfamily.</text>
</comment>
<evidence type="ECO:0000250" key="1"/>
<evidence type="ECO:0000269" key="2">
    <source>
    </source>
</evidence>
<evidence type="ECO:0000269" key="3">
    <source>
    </source>
</evidence>
<evidence type="ECO:0000269" key="4">
    <source>
    </source>
</evidence>
<evidence type="ECO:0000269" key="5">
    <source>
    </source>
</evidence>
<evidence type="ECO:0000303" key="6">
    <source>
    </source>
</evidence>
<evidence type="ECO:0000303" key="7">
    <source>
    </source>
</evidence>
<evidence type="ECO:0000303" key="8">
    <source>
    </source>
</evidence>
<evidence type="ECO:0000303" key="9">
    <source>
    </source>
</evidence>
<evidence type="ECO:0000305" key="10"/>
<evidence type="ECO:0000305" key="11">
    <source>
    </source>
</evidence>
<evidence type="ECO:0000312" key="12">
    <source>
        <dbReference type="PDB" id="1MPZ"/>
    </source>
</evidence>
<evidence type="ECO:0007744" key="13">
    <source>
        <dbReference type="PDB" id="1MPZ"/>
    </source>
</evidence>
<evidence type="ECO:0007829" key="14">
    <source>
        <dbReference type="PDB" id="1MPZ"/>
    </source>
</evidence>
<dbReference type="PDB" id="1MPZ">
    <property type="method" value="NMR"/>
    <property type="chains" value="A=1-41"/>
</dbReference>
<dbReference type="PDBsum" id="1MPZ"/>
<dbReference type="SMR" id="P83469"/>
<dbReference type="EvolutionaryTrace" id="P83469"/>
<dbReference type="GO" id="GO:0005576">
    <property type="term" value="C:extracellular region"/>
    <property type="evidence" value="ECO:0007669"/>
    <property type="project" value="UniProtKB-SubCell"/>
</dbReference>
<dbReference type="GO" id="GO:0090729">
    <property type="term" value="F:toxin activity"/>
    <property type="evidence" value="ECO:0007669"/>
    <property type="project" value="UniProtKB-KW"/>
</dbReference>
<dbReference type="GO" id="GO:0001525">
    <property type="term" value="P:angiogenesis"/>
    <property type="evidence" value="ECO:0007669"/>
    <property type="project" value="UniProtKB-KW"/>
</dbReference>
<dbReference type="GO" id="GO:0030154">
    <property type="term" value="P:cell differentiation"/>
    <property type="evidence" value="ECO:0007669"/>
    <property type="project" value="UniProtKB-KW"/>
</dbReference>
<dbReference type="Gene3D" id="4.10.70.10">
    <property type="entry name" value="Disintegrin domain"/>
    <property type="match status" value="1"/>
</dbReference>
<dbReference type="InterPro" id="IPR001762">
    <property type="entry name" value="Disintegrin_dom"/>
</dbReference>
<dbReference type="InterPro" id="IPR036436">
    <property type="entry name" value="Disintegrin_dom_sf"/>
</dbReference>
<dbReference type="PRINTS" id="PR00289">
    <property type="entry name" value="DISINTEGRIN"/>
</dbReference>
<dbReference type="SUPFAM" id="SSF57552">
    <property type="entry name" value="Blood coagulation inhibitor (disintegrin)"/>
    <property type="match status" value="1"/>
</dbReference>
<accession>P83469</accession>
<sequence length="41" mass="4401">CTTGPCCRQCKLKPAGTTCWKTSLTSHYCTGKSCDCPLYPG</sequence>
<protein>
    <recommendedName>
        <fullName evidence="6 7 8 9">Disintegrin obtustatin</fullName>
    </recommendedName>
</protein>
<keyword id="KW-0002">3D-structure</keyword>
<keyword id="KW-0037">Angiogenesis</keyword>
<keyword id="KW-1217">Cell adhesion impairing toxin</keyword>
<keyword id="KW-0217">Developmental protein</keyword>
<keyword id="KW-0221">Differentiation</keyword>
<keyword id="KW-0903">Direct protein sequencing</keyword>
<keyword id="KW-1015">Disulfide bond</keyword>
<keyword id="KW-0964">Secreted</keyword>
<keyword id="KW-0800">Toxin</keyword>
<proteinExistence type="evidence at protein level"/>
<organism>
    <name type="scientific">Macrovipera lebetina obtusa</name>
    <name type="common">Levant blunt-nosed viper</name>
    <name type="synonym">Vipera lebetina obtusa</name>
    <dbReference type="NCBI Taxonomy" id="209528"/>
    <lineage>
        <taxon>Eukaryota</taxon>
        <taxon>Metazoa</taxon>
        <taxon>Chordata</taxon>
        <taxon>Craniata</taxon>
        <taxon>Vertebrata</taxon>
        <taxon>Euteleostomi</taxon>
        <taxon>Lepidosauria</taxon>
        <taxon>Squamata</taxon>
        <taxon>Bifurcata</taxon>
        <taxon>Unidentata</taxon>
        <taxon>Episquamata</taxon>
        <taxon>Toxicofera</taxon>
        <taxon>Serpentes</taxon>
        <taxon>Colubroidea</taxon>
        <taxon>Viperidae</taxon>
        <taxon>Viperinae</taxon>
        <taxon>Macrovipera</taxon>
        <taxon>Macrovipera lebetinus</taxon>
    </lineage>
</organism>
<name>DIS_MACLO</name>